<sequence>MFGKLTLKAIPVDEPIIMVTYISIILIALFISFSITYFKKWKYLWYEWFTTVDHKKISIMYGILAFIMLFRGFVDAILMRTQQVIASSGNTGFLPPHHYDQIFTAHGVIMIFFVAMPLVIGLMNLVVPLQIGARDVAFPFLNNLSFWLNVSGAILLTLSLGIGEFAQTGWLAYPPLSEVKYSPGVGVDYWIWSLQISGVGTTLTGINFLITILKMRAPGMCFFKMPVFTWAALCTNILIVISFPVLTTTLLLLTLDRCFDFHFFTNNFGGNPMMYVNLIWIWGHPEVYILVLPVFGVFSEVVATFSKKRLFGYVSLVWATLAITILSFIVWLHHFFTMGAGSNVNAFFGITTMIIAIPTGVKIFNWLFTMYQGRVHMHSSMLWTIGFLITFSIGGMTGVLLSIPPADFILHNSLFLVAHFHNVIIGGVVFGCFAGINYWFPKLFGFILNELWGKRAFWFWIIGFFTAFMPLYFLGFMGMTRRLSQNIDIEFHFLLSIAAIGAILIGIGILCQIIQFWVSVRDRHINLDVTGDPWDGRTLEWSTSSPAPLYNFAIIPHIKNKDDFWELKKQKNQVQKKQYSAIHMPKNTGLGIFISFFSLLFGFSAVWNIIWLSFLSFLVVIISLIFKSIDENTEYTVSVKEIESIENRHLENVQKAGLK</sequence>
<name>CYOB_BUCAP</name>
<dbReference type="EC" id="7.1.1.3" evidence="2"/>
<dbReference type="EMBL" id="AE013218">
    <property type="protein sequence ID" value="AAM67998.1"/>
    <property type="molecule type" value="Genomic_DNA"/>
</dbReference>
<dbReference type="RefSeq" id="WP_011053965.1">
    <property type="nucleotide sequence ID" value="NC_004061.1"/>
</dbReference>
<dbReference type="SMR" id="Q8K994"/>
<dbReference type="STRING" id="198804.BUsg_455"/>
<dbReference type="GeneID" id="93003926"/>
<dbReference type="KEGG" id="bas:BUsg_455"/>
<dbReference type="eggNOG" id="COG0843">
    <property type="taxonomic scope" value="Bacteria"/>
</dbReference>
<dbReference type="HOGENOM" id="CLU_011899_7_1_6"/>
<dbReference type="Proteomes" id="UP000000416">
    <property type="component" value="Chromosome"/>
</dbReference>
<dbReference type="GO" id="GO:0005886">
    <property type="term" value="C:plasma membrane"/>
    <property type="evidence" value="ECO:0007669"/>
    <property type="project" value="UniProtKB-SubCell"/>
</dbReference>
<dbReference type="GO" id="GO:0009486">
    <property type="term" value="F:cytochrome bo3 ubiquinol oxidase activity"/>
    <property type="evidence" value="ECO:0007669"/>
    <property type="project" value="UniProtKB-EC"/>
</dbReference>
<dbReference type="GO" id="GO:0004129">
    <property type="term" value="F:cytochrome-c oxidase activity"/>
    <property type="evidence" value="ECO:0007669"/>
    <property type="project" value="InterPro"/>
</dbReference>
<dbReference type="GO" id="GO:0020037">
    <property type="term" value="F:heme binding"/>
    <property type="evidence" value="ECO:0007669"/>
    <property type="project" value="InterPro"/>
</dbReference>
<dbReference type="GO" id="GO:0046872">
    <property type="term" value="F:metal ion binding"/>
    <property type="evidence" value="ECO:0007669"/>
    <property type="project" value="UniProtKB-KW"/>
</dbReference>
<dbReference type="GO" id="GO:0016682">
    <property type="term" value="F:oxidoreductase activity, acting on diphenols and related substances as donors, oxygen as acceptor"/>
    <property type="evidence" value="ECO:0007669"/>
    <property type="project" value="InterPro"/>
</dbReference>
<dbReference type="GO" id="GO:0009060">
    <property type="term" value="P:aerobic respiration"/>
    <property type="evidence" value="ECO:0007669"/>
    <property type="project" value="InterPro"/>
</dbReference>
<dbReference type="GO" id="GO:0015990">
    <property type="term" value="P:electron transport coupled proton transport"/>
    <property type="evidence" value="ECO:0007669"/>
    <property type="project" value="TreeGrafter"/>
</dbReference>
<dbReference type="GO" id="GO:0022904">
    <property type="term" value="P:respiratory electron transport chain"/>
    <property type="evidence" value="ECO:0007669"/>
    <property type="project" value="TreeGrafter"/>
</dbReference>
<dbReference type="CDD" id="cd01662">
    <property type="entry name" value="Ubiquinol_Oxidase_I"/>
    <property type="match status" value="1"/>
</dbReference>
<dbReference type="FunFam" id="1.20.210.10:FF:000002">
    <property type="entry name" value="Cytochrome o ubiquinol oxidase, subunit I"/>
    <property type="match status" value="1"/>
</dbReference>
<dbReference type="Gene3D" id="1.20.210.10">
    <property type="entry name" value="Cytochrome c oxidase-like, subunit I domain"/>
    <property type="match status" value="1"/>
</dbReference>
<dbReference type="InterPro" id="IPR023616">
    <property type="entry name" value="Cyt_c_oxase-like_su1_dom"/>
</dbReference>
<dbReference type="InterPro" id="IPR036927">
    <property type="entry name" value="Cyt_c_oxase-like_su1_sf"/>
</dbReference>
<dbReference type="InterPro" id="IPR000883">
    <property type="entry name" value="Cyt_C_Oxase_1"/>
</dbReference>
<dbReference type="InterPro" id="IPR023615">
    <property type="entry name" value="Cyt_c_Oxase_su1_BS"/>
</dbReference>
<dbReference type="InterPro" id="IPR014207">
    <property type="entry name" value="Cyt_c_ubiqinol_oxidase_su1"/>
</dbReference>
<dbReference type="NCBIfam" id="TIGR02843">
    <property type="entry name" value="CyoB"/>
    <property type="match status" value="1"/>
</dbReference>
<dbReference type="PANTHER" id="PTHR10422:SF35">
    <property type="entry name" value="CYTOCHROME BO(3) UBIQUINOL OXIDASE SUBUNIT 1"/>
    <property type="match status" value="1"/>
</dbReference>
<dbReference type="PANTHER" id="PTHR10422">
    <property type="entry name" value="CYTOCHROME C OXIDASE SUBUNIT 1"/>
    <property type="match status" value="1"/>
</dbReference>
<dbReference type="Pfam" id="PF00115">
    <property type="entry name" value="COX1"/>
    <property type="match status" value="1"/>
</dbReference>
<dbReference type="PRINTS" id="PR01165">
    <property type="entry name" value="CYCOXIDASEI"/>
</dbReference>
<dbReference type="SUPFAM" id="SSF81442">
    <property type="entry name" value="Cytochrome c oxidase subunit I-like"/>
    <property type="match status" value="1"/>
</dbReference>
<dbReference type="PROSITE" id="PS50855">
    <property type="entry name" value="COX1"/>
    <property type="match status" value="1"/>
</dbReference>
<dbReference type="PROSITE" id="PS00077">
    <property type="entry name" value="COX1_CUB"/>
    <property type="match status" value="1"/>
</dbReference>
<reference key="1">
    <citation type="journal article" date="2002" name="Science">
        <title>50 million years of genomic stasis in endosymbiotic bacteria.</title>
        <authorList>
            <person name="Tamas I."/>
            <person name="Klasson L."/>
            <person name="Canbaeck B."/>
            <person name="Naeslund A.K."/>
            <person name="Eriksson A.-S."/>
            <person name="Wernegreen J.J."/>
            <person name="Sandstroem J.P."/>
            <person name="Moran N.A."/>
            <person name="Andersson S.G.E."/>
        </authorList>
    </citation>
    <scope>NUCLEOTIDE SEQUENCE [LARGE SCALE GENOMIC DNA]</scope>
    <source>
        <strain>Sg</strain>
    </source>
</reference>
<evidence type="ECO:0000250" key="1"/>
<evidence type="ECO:0000250" key="2">
    <source>
        <dbReference type="UniProtKB" id="P0ABI8"/>
    </source>
</evidence>
<evidence type="ECO:0000255" key="3"/>
<evidence type="ECO:0000305" key="4"/>
<accession>Q8K994</accession>
<comment type="function">
    <text evidence="2">Cytochrome bo(3) ubiquinol oxidase is the terminal enzyme in the aerobic respiratory chain. Catalyzes the four-electron reduction of O2 to water, using a ubiquinol as a membrane soluble electron donor for molecular oxygen reduction. Has proton pump activity across the membrane in addition to electron transfer, pumping 2 protons/electron and generating a proton motive force. All the redox centers of this enzyme complex are located within the largest subunit, subunit I. Protons are probably pumped via D- and K- channels found in this subunit.</text>
</comment>
<comment type="catalytic activity">
    <reaction evidence="2">
        <text>2 a ubiquinol + O2 + n H(+)(in) = 2 a ubiquinone + 2 H2O + n H(+)(out)</text>
        <dbReference type="Rhea" id="RHEA:30251"/>
        <dbReference type="Rhea" id="RHEA-COMP:9565"/>
        <dbReference type="Rhea" id="RHEA-COMP:9566"/>
        <dbReference type="ChEBI" id="CHEBI:15377"/>
        <dbReference type="ChEBI" id="CHEBI:15378"/>
        <dbReference type="ChEBI" id="CHEBI:15379"/>
        <dbReference type="ChEBI" id="CHEBI:16389"/>
        <dbReference type="ChEBI" id="CHEBI:17976"/>
        <dbReference type="EC" id="7.1.1.3"/>
    </reaction>
</comment>
<comment type="cofactor">
    <cofactor evidence="2">
        <name>Cu(2+)</name>
        <dbReference type="ChEBI" id="CHEBI:29036"/>
    </cofactor>
    <text evidence="2">Binds 1 copper B ion per subunit.</text>
</comment>
<comment type="cofactor">
    <cofactor evidence="2">
        <name>heme b</name>
        <dbReference type="ChEBI" id="CHEBI:60344"/>
    </cofactor>
    <text evidence="2">Binds 1 low-spin heme b per subunit.</text>
</comment>
<comment type="cofactor">
    <cofactor evidence="2">
        <name>Fe(II)-heme o</name>
        <dbReference type="ChEBI" id="CHEBI:60530"/>
    </cofactor>
    <text evidence="2">Binds 1 high-spin heme o per subunit, also named heme o(3).</text>
</comment>
<comment type="subunit">
    <text evidence="2">The cytochrome bo(3) ubiquinol oxidase complex is a heterooctamer of two A chains, two B chains, two C chains and two D chains.</text>
</comment>
<comment type="subcellular location">
    <subcellularLocation>
        <location evidence="1">Cell membrane</location>
        <topology evidence="1">Multi-pass membrane protein</topology>
    </subcellularLocation>
</comment>
<comment type="miscellaneous">
    <text>Ubiquinol oxidase catalyzes the terminal step in the electron transport chain.</text>
</comment>
<comment type="similarity">
    <text evidence="4">Belongs to the heme-copper respiratory oxidase family.</text>
</comment>
<organism>
    <name type="scientific">Buchnera aphidicola subsp. Schizaphis graminum (strain Sg)</name>
    <dbReference type="NCBI Taxonomy" id="198804"/>
    <lineage>
        <taxon>Bacteria</taxon>
        <taxon>Pseudomonadati</taxon>
        <taxon>Pseudomonadota</taxon>
        <taxon>Gammaproteobacteria</taxon>
        <taxon>Enterobacterales</taxon>
        <taxon>Erwiniaceae</taxon>
        <taxon>Buchnera</taxon>
    </lineage>
</organism>
<proteinExistence type="inferred from homology"/>
<feature type="chain" id="PRO_0000183480" description="Cytochrome bo(3) ubiquinol oxidase subunit 1">
    <location>
        <begin position="1"/>
        <end position="659"/>
    </location>
</feature>
<feature type="topological domain" description="Extracellular" evidence="3">
    <location>
        <begin position="1"/>
        <end position="14"/>
    </location>
</feature>
<feature type="transmembrane region" description="Helical" evidence="3">
    <location>
        <begin position="15"/>
        <end position="35"/>
    </location>
</feature>
<feature type="topological domain" description="Cytoplasmic" evidence="3">
    <location>
        <begin position="36"/>
        <end position="58"/>
    </location>
</feature>
<feature type="transmembrane region" description="Helical" evidence="3">
    <location>
        <begin position="59"/>
        <end position="79"/>
    </location>
</feature>
<feature type="topological domain" description="Extracellular" evidence="3">
    <location>
        <begin position="80"/>
        <end position="106"/>
    </location>
</feature>
<feature type="transmembrane region" description="Helical" evidence="3">
    <location>
        <begin position="107"/>
        <end position="127"/>
    </location>
</feature>
<feature type="topological domain" description="Cytoplasmic" evidence="3">
    <location>
        <begin position="128"/>
        <end position="145"/>
    </location>
</feature>
<feature type="transmembrane region" description="Helical" evidence="3">
    <location>
        <begin position="146"/>
        <end position="166"/>
    </location>
</feature>
<feature type="topological domain" description="Extracellular" evidence="3">
    <location>
        <begin position="167"/>
        <end position="189"/>
    </location>
</feature>
<feature type="transmembrane region" description="Helical" evidence="3">
    <location>
        <begin position="190"/>
        <end position="210"/>
    </location>
</feature>
<feature type="topological domain" description="Cytoplasmic" evidence="3">
    <location>
        <begin position="211"/>
        <end position="225"/>
    </location>
</feature>
<feature type="transmembrane region" description="Helical" evidence="3">
    <location>
        <begin position="226"/>
        <end position="246"/>
    </location>
</feature>
<feature type="topological domain" description="Extracellular" evidence="3">
    <location>
        <begin position="247"/>
        <end position="277"/>
    </location>
</feature>
<feature type="transmembrane region" description="Helical" evidence="3">
    <location>
        <begin position="278"/>
        <end position="298"/>
    </location>
</feature>
<feature type="topological domain" description="Cytoplasmic" evidence="3">
    <location>
        <begin position="299"/>
        <end position="309"/>
    </location>
</feature>
<feature type="transmembrane region" description="Helical" evidence="3">
    <location>
        <begin position="310"/>
        <end position="330"/>
    </location>
</feature>
<feature type="topological domain" description="Extracellular" evidence="3">
    <location>
        <begin position="331"/>
        <end position="347"/>
    </location>
</feature>
<feature type="transmembrane region" description="Helical" evidence="3">
    <location>
        <begin position="348"/>
        <end position="368"/>
    </location>
</feature>
<feature type="topological domain" description="Cytoplasmic" evidence="3">
    <location>
        <begin position="369"/>
        <end position="380"/>
    </location>
</feature>
<feature type="transmembrane region" description="Helical" evidence="3">
    <location>
        <begin position="381"/>
        <end position="401"/>
    </location>
</feature>
<feature type="topological domain" description="Extracellular" evidence="3">
    <location>
        <begin position="402"/>
        <end position="413"/>
    </location>
</feature>
<feature type="transmembrane region" description="Helical" evidence="3">
    <location>
        <begin position="414"/>
        <end position="434"/>
    </location>
</feature>
<feature type="topological domain" description="Cytoplasmic" evidence="3">
    <location>
        <begin position="435"/>
        <end position="456"/>
    </location>
</feature>
<feature type="transmembrane region" description="Helical" evidence="3">
    <location>
        <begin position="457"/>
        <end position="477"/>
    </location>
</feature>
<feature type="topological domain" description="Extracellular" evidence="3">
    <location>
        <begin position="478"/>
        <end position="490"/>
    </location>
</feature>
<feature type="transmembrane region" description="Helical" evidence="3">
    <location>
        <begin position="491"/>
        <end position="511"/>
    </location>
</feature>
<feature type="topological domain" description="Cytoplasmic" evidence="3">
    <location>
        <begin position="512"/>
        <end position="580"/>
    </location>
</feature>
<feature type="transmembrane region" description="Helical" evidence="3">
    <location>
        <begin position="581"/>
        <end position="601"/>
    </location>
</feature>
<feature type="topological domain" description="Extracellular" evidence="3">
    <location>
        <begin position="602"/>
        <end position="605"/>
    </location>
</feature>
<feature type="transmembrane region" description="Helical" evidence="3">
    <location>
        <begin position="606"/>
        <end position="626"/>
    </location>
</feature>
<feature type="topological domain" description="Cytoplasmic" evidence="3">
    <location>
        <begin position="627"/>
        <end position="659"/>
    </location>
</feature>
<feature type="binding site" evidence="2">
    <location>
        <position position="71"/>
    </location>
    <ligand>
        <name>a ubiquinone</name>
        <dbReference type="ChEBI" id="CHEBI:16389"/>
    </ligand>
</feature>
<feature type="binding site" evidence="2">
    <location>
        <position position="75"/>
    </location>
    <ligand>
        <name>a ubiquinone</name>
        <dbReference type="ChEBI" id="CHEBI:16389"/>
    </ligand>
</feature>
<feature type="binding site" evidence="2">
    <location>
        <position position="98"/>
    </location>
    <ligand>
        <name>a ubiquinone</name>
        <dbReference type="ChEBI" id="CHEBI:16389"/>
    </ligand>
</feature>
<feature type="binding site" description="axial binding residue" evidence="2">
    <location>
        <position position="106"/>
    </location>
    <ligand>
        <name>heme b</name>
        <dbReference type="ChEBI" id="CHEBI:60344"/>
    </ligand>
    <ligandPart>
        <name>Fe</name>
        <dbReference type="ChEBI" id="CHEBI:18248"/>
    </ligandPart>
</feature>
<feature type="binding site" evidence="2">
    <location>
        <position position="170"/>
    </location>
    <ligand>
        <name>heme b</name>
        <dbReference type="ChEBI" id="CHEBI:60344"/>
    </ligand>
</feature>
<feature type="binding site" evidence="2">
    <location>
        <position position="284"/>
    </location>
    <ligand>
        <name>Cu(2+)</name>
        <dbReference type="ChEBI" id="CHEBI:29036"/>
    </ligand>
</feature>
<feature type="binding site" evidence="2">
    <location>
        <position position="288"/>
    </location>
    <ligand>
        <name>Fe(II)-heme o</name>
        <dbReference type="ChEBI" id="CHEBI:60530"/>
    </ligand>
</feature>
<feature type="binding site" evidence="2">
    <location>
        <position position="333"/>
    </location>
    <ligand>
        <name>Cu(2+)</name>
        <dbReference type="ChEBI" id="CHEBI:29036"/>
    </ligand>
</feature>
<feature type="binding site" evidence="2">
    <location>
        <position position="334"/>
    </location>
    <ligand>
        <name>Cu(2+)</name>
        <dbReference type="ChEBI" id="CHEBI:29036"/>
    </ligand>
</feature>
<feature type="binding site" evidence="2">
    <location>
        <position position="411"/>
    </location>
    <ligand>
        <name>Fe(II)-heme o</name>
        <dbReference type="ChEBI" id="CHEBI:60530"/>
    </ligand>
</feature>
<feature type="binding site" description="axial binding residue" evidence="2">
    <location>
        <position position="419"/>
    </location>
    <ligand>
        <name>Fe(II)-heme o</name>
        <dbReference type="ChEBI" id="CHEBI:60530"/>
    </ligand>
    <ligandPart>
        <name>Fe</name>
        <dbReference type="ChEBI" id="CHEBI:18248"/>
    </ligandPart>
</feature>
<feature type="binding site" description="axial binding residue" evidence="2">
    <location>
        <position position="421"/>
    </location>
    <ligand>
        <name>heme b</name>
        <dbReference type="ChEBI" id="CHEBI:60344"/>
    </ligand>
    <ligandPart>
        <name>Fe</name>
        <dbReference type="ChEBI" id="CHEBI:18248"/>
    </ligandPart>
</feature>
<feature type="binding site" evidence="2">
    <location>
        <position position="481"/>
    </location>
    <ligand>
        <name>heme b</name>
        <dbReference type="ChEBI" id="CHEBI:60344"/>
    </ligand>
</feature>
<feature type="binding site" evidence="2">
    <location>
        <position position="482"/>
    </location>
    <ligand>
        <name>heme b</name>
        <dbReference type="ChEBI" id="CHEBI:60344"/>
    </ligand>
</feature>
<feature type="cross-link" description="1'-histidyl-3'-tyrosine (His-Tyr)" evidence="1">
    <location>
        <begin position="284"/>
        <end position="288"/>
    </location>
</feature>
<keyword id="KW-1003">Cell membrane</keyword>
<keyword id="KW-0186">Copper</keyword>
<keyword id="KW-0249">Electron transport</keyword>
<keyword id="KW-0349">Heme</keyword>
<keyword id="KW-0375">Hydrogen ion transport</keyword>
<keyword id="KW-0406">Ion transport</keyword>
<keyword id="KW-0408">Iron</keyword>
<keyword id="KW-0472">Membrane</keyword>
<keyword id="KW-0479">Metal-binding</keyword>
<keyword id="KW-0679">Respiratory chain</keyword>
<keyword id="KW-1278">Translocase</keyword>
<keyword id="KW-0812">Transmembrane</keyword>
<keyword id="KW-1133">Transmembrane helix</keyword>
<keyword id="KW-0813">Transport</keyword>
<protein>
    <recommendedName>
        <fullName>Cytochrome bo(3) ubiquinol oxidase subunit 1</fullName>
        <ecNumber evidence="2">7.1.1.3</ecNumber>
    </recommendedName>
    <alternativeName>
        <fullName>Cytochrome o ubiquinol oxidase subunit 1</fullName>
        <shortName>Cytochrome o subunit 1</shortName>
    </alternativeName>
    <alternativeName>
        <fullName>Oxidase bo(3) subunit 1</fullName>
    </alternativeName>
    <alternativeName>
        <fullName>Ubiquinol oxidase polypeptide I</fullName>
    </alternativeName>
    <alternativeName>
        <fullName>Ubiquinol oxidase subunit 1</fullName>
    </alternativeName>
</protein>
<gene>
    <name type="primary">cyoB</name>
    <name type="ordered locus">BUsg_455</name>
</gene>